<keyword id="KW-0158">Chromosome</keyword>
<keyword id="KW-0469">Meiosis</keyword>
<keyword id="KW-1185">Reference proteome</keyword>
<gene>
    <name evidence="9" type="primary">Spata22</name>
    <name type="synonym">Gm882</name>
    <name type="synonym">Repro42</name>
</gene>
<organism>
    <name type="scientific">Mus musculus</name>
    <name type="common">Mouse</name>
    <dbReference type="NCBI Taxonomy" id="10090"/>
    <lineage>
        <taxon>Eukaryota</taxon>
        <taxon>Metazoa</taxon>
        <taxon>Chordata</taxon>
        <taxon>Craniata</taxon>
        <taxon>Vertebrata</taxon>
        <taxon>Euteleostomi</taxon>
        <taxon>Mammalia</taxon>
        <taxon>Eutheria</taxon>
        <taxon>Euarchontoglires</taxon>
        <taxon>Glires</taxon>
        <taxon>Rodentia</taxon>
        <taxon>Myomorpha</taxon>
        <taxon>Muroidea</taxon>
        <taxon>Muridae</taxon>
        <taxon>Murinae</taxon>
        <taxon>Mus</taxon>
        <taxon>Mus</taxon>
    </lineage>
</organism>
<dbReference type="EMBL" id="AL645739">
    <property type="status" value="NOT_ANNOTATED_CDS"/>
    <property type="molecule type" value="Genomic_DNA"/>
</dbReference>
<dbReference type="EMBL" id="BB616785">
    <property type="status" value="NOT_ANNOTATED_CDS"/>
    <property type="molecule type" value="mRNA"/>
</dbReference>
<dbReference type="CCDS" id="CCDS36219.1"/>
<dbReference type="RefSeq" id="NP_001038996.1">
    <property type="nucleotide sequence ID" value="NM_001045531.1"/>
</dbReference>
<dbReference type="RefSeq" id="XP_011247397.1">
    <property type="nucleotide sequence ID" value="XM_011249095.3"/>
</dbReference>
<dbReference type="RefSeq" id="XP_011247398.1">
    <property type="nucleotide sequence ID" value="XM_011249096.4"/>
</dbReference>
<dbReference type="RefSeq" id="XP_011247399.1">
    <property type="nucleotide sequence ID" value="XM_011249097.3"/>
</dbReference>
<dbReference type="CORUM" id="Q5SV06"/>
<dbReference type="FunCoup" id="Q5SV06">
    <property type="interactions" value="56"/>
</dbReference>
<dbReference type="STRING" id="10090.ENSMUSP00000090602"/>
<dbReference type="iPTMnet" id="Q5SV06"/>
<dbReference type="PhosphoSitePlus" id="Q5SV06"/>
<dbReference type="PaxDb" id="10090-ENSMUSP00000090602"/>
<dbReference type="ProteomicsDB" id="254544"/>
<dbReference type="Ensembl" id="ENSMUST00000092926.11">
    <property type="protein sequence ID" value="ENSMUSP00000090602.5"/>
    <property type="gene ID" value="ENSMUSG00000112920.2"/>
</dbReference>
<dbReference type="GeneID" id="380709"/>
<dbReference type="KEGG" id="mmu:380709"/>
<dbReference type="UCSC" id="uc007kan.1">
    <property type="organism name" value="mouse"/>
</dbReference>
<dbReference type="AGR" id="MGI:2685728"/>
<dbReference type="CTD" id="84690"/>
<dbReference type="MGI" id="MGI:2685728">
    <property type="gene designation" value="Spata22"/>
</dbReference>
<dbReference type="VEuPathDB" id="HostDB:ENSMUSG00000112920"/>
<dbReference type="eggNOG" id="ENOG502RNNP">
    <property type="taxonomic scope" value="Eukaryota"/>
</dbReference>
<dbReference type="GeneTree" id="ENSGT00390000018151"/>
<dbReference type="HOGENOM" id="CLU_050539_0_1_1"/>
<dbReference type="InParanoid" id="Q5SV06"/>
<dbReference type="OMA" id="QDHSPAY"/>
<dbReference type="OrthoDB" id="10028206at2759"/>
<dbReference type="PhylomeDB" id="Q5SV06"/>
<dbReference type="TreeFam" id="TF332549"/>
<dbReference type="BioGRID-ORCS" id="380709">
    <property type="hits" value="0 hits in 111 CRISPR screens"/>
</dbReference>
<dbReference type="PRO" id="PR:Q5SV06"/>
<dbReference type="Proteomes" id="UP000000589">
    <property type="component" value="Chromosome 11"/>
</dbReference>
<dbReference type="RNAct" id="Q5SV06">
    <property type="molecule type" value="protein"/>
</dbReference>
<dbReference type="Bgee" id="ENSMUSG00000112920">
    <property type="expression patterns" value="Expressed in spermatocyte and 22 other cell types or tissues"/>
</dbReference>
<dbReference type="ExpressionAtlas" id="Q5SV06">
    <property type="expression patterns" value="baseline and differential"/>
</dbReference>
<dbReference type="GO" id="GO:0005694">
    <property type="term" value="C:chromosome"/>
    <property type="evidence" value="ECO:0000314"/>
    <property type="project" value="UniProtKB"/>
</dbReference>
<dbReference type="GO" id="GO:0009566">
    <property type="term" value="P:fertilization"/>
    <property type="evidence" value="ECO:0000315"/>
    <property type="project" value="MGI"/>
</dbReference>
<dbReference type="GO" id="GO:0007276">
    <property type="term" value="P:gamete generation"/>
    <property type="evidence" value="ECO:0000315"/>
    <property type="project" value="MGI"/>
</dbReference>
<dbReference type="GO" id="GO:0007129">
    <property type="term" value="P:homologous chromosome pairing at meiosis"/>
    <property type="evidence" value="ECO:0000315"/>
    <property type="project" value="MGI"/>
</dbReference>
<dbReference type="GO" id="GO:0000711">
    <property type="term" value="P:meiotic DNA repair synthesis"/>
    <property type="evidence" value="ECO:0000315"/>
    <property type="project" value="MGI"/>
</dbReference>
<dbReference type="GO" id="GO:0051445">
    <property type="term" value="P:regulation of meiotic cell cycle"/>
    <property type="evidence" value="ECO:0000315"/>
    <property type="project" value="MGI"/>
</dbReference>
<dbReference type="GO" id="GO:0061458">
    <property type="term" value="P:reproductive system development"/>
    <property type="evidence" value="ECO:0000315"/>
    <property type="project" value="MGI"/>
</dbReference>
<dbReference type="GO" id="GO:0048137">
    <property type="term" value="P:spermatocyte division"/>
    <property type="evidence" value="ECO:0007669"/>
    <property type="project" value="Ensembl"/>
</dbReference>
<dbReference type="InterPro" id="IPR033536">
    <property type="entry name" value="Spata22"/>
</dbReference>
<dbReference type="PANTHER" id="PTHR35258">
    <property type="entry name" value="SPERMATOGENESIS-ASSOCIATED PROTEIN 22"/>
    <property type="match status" value="1"/>
</dbReference>
<dbReference type="PANTHER" id="PTHR35258:SF1">
    <property type="entry name" value="SPERMATOGENESIS-ASSOCIATED PROTEIN 22"/>
    <property type="match status" value="1"/>
</dbReference>
<proteinExistence type="evidence at protein level"/>
<reference key="1">
    <citation type="journal article" date="2009" name="PLoS Biol.">
        <title>Lineage-specific biology revealed by a finished genome assembly of the mouse.</title>
        <authorList>
            <person name="Church D.M."/>
            <person name="Goodstadt L."/>
            <person name="Hillier L.W."/>
            <person name="Zody M.C."/>
            <person name="Goldstein S."/>
            <person name="She X."/>
            <person name="Bult C.J."/>
            <person name="Agarwala R."/>
            <person name="Cherry J.L."/>
            <person name="DiCuccio M."/>
            <person name="Hlavina W."/>
            <person name="Kapustin Y."/>
            <person name="Meric P."/>
            <person name="Maglott D."/>
            <person name="Birtle Z."/>
            <person name="Marques A.C."/>
            <person name="Graves T."/>
            <person name="Zhou S."/>
            <person name="Teague B."/>
            <person name="Potamousis K."/>
            <person name="Churas C."/>
            <person name="Place M."/>
            <person name="Herschleb J."/>
            <person name="Runnheim R."/>
            <person name="Forrest D."/>
            <person name="Amos-Landgraf J."/>
            <person name="Schwartz D.C."/>
            <person name="Cheng Z."/>
            <person name="Lindblad-Toh K."/>
            <person name="Eichler E.E."/>
            <person name="Ponting C.P."/>
        </authorList>
    </citation>
    <scope>NUCLEOTIDE SEQUENCE [LARGE SCALE GENOMIC DNA]</scope>
    <source>
        <strain>C57BL/6J</strain>
    </source>
</reference>
<reference key="2">
    <citation type="journal article" date="2005" name="Science">
        <title>The transcriptional landscape of the mammalian genome.</title>
        <authorList>
            <person name="Carninci P."/>
            <person name="Kasukawa T."/>
            <person name="Katayama S."/>
            <person name="Gough J."/>
            <person name="Frith M.C."/>
            <person name="Maeda N."/>
            <person name="Oyama R."/>
            <person name="Ravasi T."/>
            <person name="Lenhard B."/>
            <person name="Wells C."/>
            <person name="Kodzius R."/>
            <person name="Shimokawa K."/>
            <person name="Bajic V.B."/>
            <person name="Brenner S.E."/>
            <person name="Batalov S."/>
            <person name="Forrest A.R."/>
            <person name="Zavolan M."/>
            <person name="Davis M.J."/>
            <person name="Wilming L.G."/>
            <person name="Aidinis V."/>
            <person name="Allen J.E."/>
            <person name="Ambesi-Impiombato A."/>
            <person name="Apweiler R."/>
            <person name="Aturaliya R.N."/>
            <person name="Bailey T.L."/>
            <person name="Bansal M."/>
            <person name="Baxter L."/>
            <person name="Beisel K.W."/>
            <person name="Bersano T."/>
            <person name="Bono H."/>
            <person name="Chalk A.M."/>
            <person name="Chiu K.P."/>
            <person name="Choudhary V."/>
            <person name="Christoffels A."/>
            <person name="Clutterbuck D.R."/>
            <person name="Crowe M.L."/>
            <person name="Dalla E."/>
            <person name="Dalrymple B.P."/>
            <person name="de Bono B."/>
            <person name="Della Gatta G."/>
            <person name="di Bernardo D."/>
            <person name="Down T."/>
            <person name="Engstrom P."/>
            <person name="Fagiolini M."/>
            <person name="Faulkner G."/>
            <person name="Fletcher C.F."/>
            <person name="Fukushima T."/>
            <person name="Furuno M."/>
            <person name="Futaki S."/>
            <person name="Gariboldi M."/>
            <person name="Georgii-Hemming P."/>
            <person name="Gingeras T.R."/>
            <person name="Gojobori T."/>
            <person name="Green R.E."/>
            <person name="Gustincich S."/>
            <person name="Harbers M."/>
            <person name="Hayashi Y."/>
            <person name="Hensch T.K."/>
            <person name="Hirokawa N."/>
            <person name="Hill D."/>
            <person name="Huminiecki L."/>
            <person name="Iacono M."/>
            <person name="Ikeo K."/>
            <person name="Iwama A."/>
            <person name="Ishikawa T."/>
            <person name="Jakt M."/>
            <person name="Kanapin A."/>
            <person name="Katoh M."/>
            <person name="Kawasawa Y."/>
            <person name="Kelso J."/>
            <person name="Kitamura H."/>
            <person name="Kitano H."/>
            <person name="Kollias G."/>
            <person name="Krishnan S.P."/>
            <person name="Kruger A."/>
            <person name="Kummerfeld S.K."/>
            <person name="Kurochkin I.V."/>
            <person name="Lareau L.F."/>
            <person name="Lazarevic D."/>
            <person name="Lipovich L."/>
            <person name="Liu J."/>
            <person name="Liuni S."/>
            <person name="McWilliam S."/>
            <person name="Madan Babu M."/>
            <person name="Madera M."/>
            <person name="Marchionni L."/>
            <person name="Matsuda H."/>
            <person name="Matsuzawa S."/>
            <person name="Miki H."/>
            <person name="Mignone F."/>
            <person name="Miyake S."/>
            <person name="Morris K."/>
            <person name="Mottagui-Tabar S."/>
            <person name="Mulder N."/>
            <person name="Nakano N."/>
            <person name="Nakauchi H."/>
            <person name="Ng P."/>
            <person name="Nilsson R."/>
            <person name="Nishiguchi S."/>
            <person name="Nishikawa S."/>
            <person name="Nori F."/>
            <person name="Ohara O."/>
            <person name="Okazaki Y."/>
            <person name="Orlando V."/>
            <person name="Pang K.C."/>
            <person name="Pavan W.J."/>
            <person name="Pavesi G."/>
            <person name="Pesole G."/>
            <person name="Petrovsky N."/>
            <person name="Piazza S."/>
            <person name="Reed J."/>
            <person name="Reid J.F."/>
            <person name="Ring B.Z."/>
            <person name="Ringwald M."/>
            <person name="Rost B."/>
            <person name="Ruan Y."/>
            <person name="Salzberg S.L."/>
            <person name="Sandelin A."/>
            <person name="Schneider C."/>
            <person name="Schoenbach C."/>
            <person name="Sekiguchi K."/>
            <person name="Semple C.A."/>
            <person name="Seno S."/>
            <person name="Sessa L."/>
            <person name="Sheng Y."/>
            <person name="Shibata Y."/>
            <person name="Shimada H."/>
            <person name="Shimada K."/>
            <person name="Silva D."/>
            <person name="Sinclair B."/>
            <person name="Sperling S."/>
            <person name="Stupka E."/>
            <person name="Sugiura K."/>
            <person name="Sultana R."/>
            <person name="Takenaka Y."/>
            <person name="Taki K."/>
            <person name="Tammoja K."/>
            <person name="Tan S.L."/>
            <person name="Tang S."/>
            <person name="Taylor M.S."/>
            <person name="Tegner J."/>
            <person name="Teichmann S.A."/>
            <person name="Ueda H.R."/>
            <person name="van Nimwegen E."/>
            <person name="Verardo R."/>
            <person name="Wei C.L."/>
            <person name="Yagi K."/>
            <person name="Yamanishi H."/>
            <person name="Zabarovsky E."/>
            <person name="Zhu S."/>
            <person name="Zimmer A."/>
            <person name="Hide W."/>
            <person name="Bult C."/>
            <person name="Grimmond S.M."/>
            <person name="Teasdale R.D."/>
            <person name="Liu E.T."/>
            <person name="Brusic V."/>
            <person name="Quackenbush J."/>
            <person name="Wahlestedt C."/>
            <person name="Mattick J.S."/>
            <person name="Hume D.A."/>
            <person name="Kai C."/>
            <person name="Sasaki D."/>
            <person name="Tomaru Y."/>
            <person name="Fukuda S."/>
            <person name="Kanamori-Katayama M."/>
            <person name="Suzuki M."/>
            <person name="Aoki J."/>
            <person name="Arakawa T."/>
            <person name="Iida J."/>
            <person name="Imamura K."/>
            <person name="Itoh M."/>
            <person name="Kato T."/>
            <person name="Kawaji H."/>
            <person name="Kawagashira N."/>
            <person name="Kawashima T."/>
            <person name="Kojima M."/>
            <person name="Kondo S."/>
            <person name="Konno H."/>
            <person name="Nakano K."/>
            <person name="Ninomiya N."/>
            <person name="Nishio T."/>
            <person name="Okada M."/>
            <person name="Plessy C."/>
            <person name="Shibata K."/>
            <person name="Shiraki T."/>
            <person name="Suzuki S."/>
            <person name="Tagami M."/>
            <person name="Waki K."/>
            <person name="Watahiki A."/>
            <person name="Okamura-Oho Y."/>
            <person name="Suzuki H."/>
            <person name="Kawai J."/>
            <person name="Hayashizaki Y."/>
        </authorList>
    </citation>
    <scope>NUCLEOTIDE SEQUENCE [LARGE SCALE MRNA] OF 1-187</scope>
    <source>
        <strain>C57BL/6J</strain>
        <tissue>Testis</tissue>
    </source>
</reference>
<reference key="3">
    <citation type="journal article" date="2012" name="Biol. Reprod.">
        <title>Spata22, a novel vertebrate-specific gene, is required for meiotic progress in mouse germ cells.</title>
        <authorList>
            <person name="La Salle S."/>
            <person name="Palmer K."/>
            <person name="O'Brien M."/>
            <person name="Schimenti J.C."/>
            <person name="Eppig J."/>
            <person name="Handel M.A."/>
        </authorList>
    </citation>
    <scope>FUNCTION</scope>
    <scope>TISSUE SPECIFICITY</scope>
    <scope>DEVELOPMENTAL STAGE</scope>
    <scope>DISRUPTION PHENOTYPE</scope>
</reference>
<reference key="4">
    <citation type="journal article" date="2013" name="Nat. Commun.">
        <title>MEIOB exhibits single-stranded DNA-binding and exonuclease activities and is essential for meiotic recombination.</title>
        <authorList>
            <person name="Luo M."/>
            <person name="Yang F."/>
            <person name="Leu N.A."/>
            <person name="Landaiche J."/>
            <person name="Handel M.A."/>
            <person name="Benavente R."/>
            <person name="La Salle S."/>
            <person name="Wang P.J."/>
        </authorList>
    </citation>
    <scope>SUBCELLULAR LOCATION</scope>
    <scope>INTERACTION WITH MEIOB AND RPA2</scope>
</reference>
<reference key="5">
    <citation type="journal article" date="2018" name="Commun. Biol.">
        <title>Evolutionarily-conserved MZIP2 is essential for crossover formation in mammalian meiosis.</title>
        <authorList>
            <person name="Zhang Q."/>
            <person name="Shao J."/>
            <person name="Fan H.Y."/>
            <person name="Yu C."/>
        </authorList>
    </citation>
    <scope>SUBCELLULAR LOCATION</scope>
</reference>
<reference key="6">
    <citation type="journal article" date="2019" name="Sci. Adv.">
        <title>SPO16 binds SHOC1 to promote homologous recombination and crossing-over in meiotic prophase I.</title>
        <authorList>
            <person name="Zhang Q."/>
            <person name="Ji S.Y."/>
            <person name="Busayavalasa K."/>
            <person name="Yu C."/>
        </authorList>
    </citation>
    <scope>SUBCELLULAR LOCATION</scope>
</reference>
<reference key="7">
    <citation type="journal article" date="2020" name="Nat. Commun.">
        <title>The BRCA2-MEILB2-BRME1 complex governs meiotic recombination and impairs the mitotic BRCA2-RAD51 function in cancer cells.</title>
        <authorList>
            <person name="Zhang J."/>
            <person name="Gurusaran M."/>
            <person name="Fujiwara Y."/>
            <person name="Zhang K."/>
            <person name="Echbarthi M."/>
            <person name="Vorontsov E."/>
            <person name="Guo R."/>
            <person name="Pendlebury D.F."/>
            <person name="Alam I."/>
            <person name="Livera G."/>
            <person name="Emmanuelle M."/>
            <person name="Wang P.J."/>
            <person name="Nandakumar J."/>
            <person name="Davies O.R."/>
            <person name="Shibuya H."/>
        </authorList>
    </citation>
    <scope>INTERACTION WITH BRME1</scope>
</reference>
<feature type="chain" id="PRO_0000251607" description="Spermatogenesis-associated protein 22">
    <location>
        <begin position="1"/>
        <end position="358"/>
    </location>
</feature>
<feature type="region of interest" description="Disordered" evidence="2">
    <location>
        <begin position="1"/>
        <end position="51"/>
    </location>
</feature>
<feature type="region of interest" description="Disordered" evidence="2">
    <location>
        <begin position="81"/>
        <end position="122"/>
    </location>
</feature>
<feature type="region of interest" description="Disordered" evidence="2">
    <location>
        <begin position="150"/>
        <end position="172"/>
    </location>
</feature>
<feature type="compositionally biased region" description="Polar residues" evidence="2">
    <location>
        <begin position="1"/>
        <end position="12"/>
    </location>
</feature>
<feature type="compositionally biased region" description="Polar residues" evidence="2">
    <location>
        <begin position="30"/>
        <end position="51"/>
    </location>
</feature>
<feature type="compositionally biased region" description="Polar residues" evidence="2">
    <location>
        <begin position="81"/>
        <end position="121"/>
    </location>
</feature>
<feature type="compositionally biased region" description="Polar residues" evidence="2">
    <location>
        <begin position="150"/>
        <end position="159"/>
    </location>
</feature>
<sequence>MKRNLNESSARSTAGCLPVPLFNQKKRNRQPLTSNPLQNDPGVSTVSDSYGSPSFPTDWAWEAVNPEVAPLKKTVNTGQIPASASYPWRSQDSVSKSIQSNAERSQSAWGYRGNNRNTSLRTWDFRPQHKTVSPAANSEFSSCPVNLGAQQQKQFQTPEFPNLPGHKEAEVPRQTCLSKLPGSTMKGPDRASALQAFKPSFQQNPFKKTVLGDIPRENSLKEGTLHQLKEKDNSLRIISAVIESMKYWRAHVQKTVLLFEILAVLDSAVTSGPHYSKTFLMRDGKNILPCVFYEIDRELPRLIRGRVHRCVGHYDPDKNIFKCVSVRPASASEQKTFQAFVTIADAEMKYHTKVTNEM</sequence>
<protein>
    <recommendedName>
        <fullName evidence="8">Spermatogenesis-associated protein 22</fullName>
    </recommendedName>
</protein>
<accession>Q5SV06</accession>
<comment type="function">
    <text evidence="3">Meiosis-specific protein required for homologous recombination in meiosis I.</text>
</comment>
<comment type="subunit">
    <text evidence="1 4 7">Component of a multiprotein complex with MEIOB and RPA2 (PubMed:24240703). Interacts with MEIOB (By similarity). Interacts with the complex BRME1:HSF2BP:BRCA2 (PubMed:32345962).</text>
</comment>
<comment type="subcellular location">
    <subcellularLocation>
        <location evidence="4 5 6">Chromosome</location>
    </subcellularLocation>
    <text evidence="4">Localizes on meiotic chromosome axes. Accumulates on resected DNA. Localization is dependent on MEIOB.</text>
</comment>
<comment type="tissue specificity">
    <text evidence="3">Specifically expressed in gonadal germ cells, when male and female germ cells progress through prophase of meiosis I.</text>
</comment>
<comment type="developmental stage">
    <text evidence="3">In testis, weakly present from 8 dpp, and readily detectable from 10 dpp, with expression sustained through adulthood. Present in all populations of spermatocytes (at protein level).</text>
</comment>
<comment type="disruption phenotype">
    <text evidence="3">Mice develop and grow normally but show infertility in both sexes. Gametogenesis is affected with germ cells that do not progress beyond early meiotic prophase, with subsequent germ cell loss in both males and females.</text>
</comment>
<name>SPT22_MOUSE</name>
<evidence type="ECO:0000250" key="1">
    <source>
        <dbReference type="UniProtKB" id="Q8NHS9"/>
    </source>
</evidence>
<evidence type="ECO:0000256" key="2">
    <source>
        <dbReference type="SAM" id="MobiDB-lite"/>
    </source>
</evidence>
<evidence type="ECO:0000269" key="3">
    <source>
    </source>
</evidence>
<evidence type="ECO:0000269" key="4">
    <source>
    </source>
</evidence>
<evidence type="ECO:0000269" key="5">
    <source>
    </source>
</evidence>
<evidence type="ECO:0000269" key="6">
    <source>
    </source>
</evidence>
<evidence type="ECO:0000269" key="7">
    <source>
    </source>
</evidence>
<evidence type="ECO:0000305" key="8"/>
<evidence type="ECO:0000312" key="9">
    <source>
        <dbReference type="MGI" id="MGI:2685728"/>
    </source>
</evidence>